<keyword id="KW-0240">DNA-directed RNA polymerase</keyword>
<keyword id="KW-0548">Nucleotidyltransferase</keyword>
<keyword id="KW-1185">Reference proteome</keyword>
<keyword id="KW-0804">Transcription</keyword>
<keyword id="KW-0808">Transferase</keyword>
<organism>
    <name type="scientific">Caldanaerobacter subterraneus subsp. tengcongensis (strain DSM 15242 / JCM 11007 / NBRC 100824 / MB4)</name>
    <name type="common">Thermoanaerobacter tengcongensis</name>
    <dbReference type="NCBI Taxonomy" id="273068"/>
    <lineage>
        <taxon>Bacteria</taxon>
        <taxon>Bacillati</taxon>
        <taxon>Bacillota</taxon>
        <taxon>Clostridia</taxon>
        <taxon>Thermoanaerobacterales</taxon>
        <taxon>Thermoanaerobacteraceae</taxon>
        <taxon>Caldanaerobacter</taxon>
    </lineage>
</organism>
<feature type="chain" id="PRO_0000047986" description="DNA-directed RNA polymerase subunit beta">
    <location>
        <begin position="1"/>
        <end position="1234"/>
    </location>
</feature>
<feature type="region of interest" description="Disordered" evidence="2">
    <location>
        <begin position="1187"/>
        <end position="1234"/>
    </location>
</feature>
<feature type="compositionally biased region" description="Acidic residues" evidence="2">
    <location>
        <begin position="1192"/>
        <end position="1234"/>
    </location>
</feature>
<proteinExistence type="inferred from homology"/>
<accession>Q8R7U6</accession>
<evidence type="ECO:0000255" key="1">
    <source>
        <dbReference type="HAMAP-Rule" id="MF_01321"/>
    </source>
</evidence>
<evidence type="ECO:0000256" key="2">
    <source>
        <dbReference type="SAM" id="MobiDB-lite"/>
    </source>
</evidence>
<gene>
    <name evidence="1" type="primary">rpoB</name>
    <name type="ordered locus">TTE2301</name>
</gene>
<dbReference type="EC" id="2.7.7.6" evidence="1"/>
<dbReference type="EMBL" id="AE008691">
    <property type="protein sequence ID" value="AAM25443.1"/>
    <property type="molecule type" value="Genomic_DNA"/>
</dbReference>
<dbReference type="RefSeq" id="WP_011026346.1">
    <property type="nucleotide sequence ID" value="NC_003869.1"/>
</dbReference>
<dbReference type="SMR" id="Q8R7U6"/>
<dbReference type="STRING" id="273068.TTE2301"/>
<dbReference type="KEGG" id="tte:TTE2301"/>
<dbReference type="eggNOG" id="COG0085">
    <property type="taxonomic scope" value="Bacteria"/>
</dbReference>
<dbReference type="HOGENOM" id="CLU_000524_4_0_9"/>
<dbReference type="OrthoDB" id="9803954at2"/>
<dbReference type="Proteomes" id="UP000000555">
    <property type="component" value="Chromosome"/>
</dbReference>
<dbReference type="GO" id="GO:0000428">
    <property type="term" value="C:DNA-directed RNA polymerase complex"/>
    <property type="evidence" value="ECO:0007669"/>
    <property type="project" value="UniProtKB-KW"/>
</dbReference>
<dbReference type="GO" id="GO:0003677">
    <property type="term" value="F:DNA binding"/>
    <property type="evidence" value="ECO:0007669"/>
    <property type="project" value="UniProtKB-UniRule"/>
</dbReference>
<dbReference type="GO" id="GO:0003899">
    <property type="term" value="F:DNA-directed RNA polymerase activity"/>
    <property type="evidence" value="ECO:0007669"/>
    <property type="project" value="UniProtKB-UniRule"/>
</dbReference>
<dbReference type="GO" id="GO:0032549">
    <property type="term" value="F:ribonucleoside binding"/>
    <property type="evidence" value="ECO:0007669"/>
    <property type="project" value="InterPro"/>
</dbReference>
<dbReference type="GO" id="GO:0006351">
    <property type="term" value="P:DNA-templated transcription"/>
    <property type="evidence" value="ECO:0007669"/>
    <property type="project" value="UniProtKB-UniRule"/>
</dbReference>
<dbReference type="CDD" id="cd00653">
    <property type="entry name" value="RNA_pol_B_RPB2"/>
    <property type="match status" value="1"/>
</dbReference>
<dbReference type="FunFam" id="3.90.1800.10:FF:000001">
    <property type="entry name" value="DNA-directed RNA polymerase subunit beta"/>
    <property type="match status" value="1"/>
</dbReference>
<dbReference type="Gene3D" id="2.40.50.100">
    <property type="match status" value="1"/>
</dbReference>
<dbReference type="Gene3D" id="2.40.50.150">
    <property type="match status" value="1"/>
</dbReference>
<dbReference type="Gene3D" id="3.90.1100.10">
    <property type="match status" value="3"/>
</dbReference>
<dbReference type="Gene3D" id="2.40.270.10">
    <property type="entry name" value="DNA-directed RNA polymerase, subunit 2, domain 6"/>
    <property type="match status" value="1"/>
</dbReference>
<dbReference type="Gene3D" id="3.90.1800.10">
    <property type="entry name" value="RNA polymerase alpha subunit dimerisation domain"/>
    <property type="match status" value="1"/>
</dbReference>
<dbReference type="Gene3D" id="3.90.1110.10">
    <property type="entry name" value="RNA polymerase Rpb2, domain 2"/>
    <property type="match status" value="1"/>
</dbReference>
<dbReference type="HAMAP" id="MF_01321">
    <property type="entry name" value="RNApol_bact_RpoB"/>
    <property type="match status" value="1"/>
</dbReference>
<dbReference type="InterPro" id="IPR019462">
    <property type="entry name" value="DNA-dir_RNA_pol_bsu_external_1"/>
</dbReference>
<dbReference type="InterPro" id="IPR015712">
    <property type="entry name" value="DNA-dir_RNA_pol_su2"/>
</dbReference>
<dbReference type="InterPro" id="IPR007120">
    <property type="entry name" value="DNA-dir_RNAP_su2_dom"/>
</dbReference>
<dbReference type="InterPro" id="IPR037033">
    <property type="entry name" value="DNA-dir_RNAP_su2_hyb_sf"/>
</dbReference>
<dbReference type="InterPro" id="IPR010243">
    <property type="entry name" value="RNA_pol_bsu_bac"/>
</dbReference>
<dbReference type="InterPro" id="IPR007121">
    <property type="entry name" value="RNA_pol_bsu_CS"/>
</dbReference>
<dbReference type="InterPro" id="IPR007644">
    <property type="entry name" value="RNA_pol_bsu_protrusion"/>
</dbReference>
<dbReference type="InterPro" id="IPR007642">
    <property type="entry name" value="RNA_pol_Rpb2_2"/>
</dbReference>
<dbReference type="InterPro" id="IPR037034">
    <property type="entry name" value="RNA_pol_Rpb2_2_sf"/>
</dbReference>
<dbReference type="InterPro" id="IPR007645">
    <property type="entry name" value="RNA_pol_Rpb2_3"/>
</dbReference>
<dbReference type="InterPro" id="IPR007641">
    <property type="entry name" value="RNA_pol_Rpb2_7"/>
</dbReference>
<dbReference type="InterPro" id="IPR014724">
    <property type="entry name" value="RNA_pol_RPB2_OB-fold"/>
</dbReference>
<dbReference type="NCBIfam" id="NF001616">
    <property type="entry name" value="PRK00405.1"/>
    <property type="match status" value="1"/>
</dbReference>
<dbReference type="NCBIfam" id="TIGR02013">
    <property type="entry name" value="rpoB"/>
    <property type="match status" value="1"/>
</dbReference>
<dbReference type="PANTHER" id="PTHR20856">
    <property type="entry name" value="DNA-DIRECTED RNA POLYMERASE I SUBUNIT 2"/>
    <property type="match status" value="1"/>
</dbReference>
<dbReference type="Pfam" id="PF04563">
    <property type="entry name" value="RNA_pol_Rpb2_1"/>
    <property type="match status" value="1"/>
</dbReference>
<dbReference type="Pfam" id="PF04561">
    <property type="entry name" value="RNA_pol_Rpb2_2"/>
    <property type="match status" value="2"/>
</dbReference>
<dbReference type="Pfam" id="PF04565">
    <property type="entry name" value="RNA_pol_Rpb2_3"/>
    <property type="match status" value="1"/>
</dbReference>
<dbReference type="Pfam" id="PF10385">
    <property type="entry name" value="RNA_pol_Rpb2_45"/>
    <property type="match status" value="1"/>
</dbReference>
<dbReference type="Pfam" id="PF00562">
    <property type="entry name" value="RNA_pol_Rpb2_6"/>
    <property type="match status" value="1"/>
</dbReference>
<dbReference type="Pfam" id="PF04560">
    <property type="entry name" value="RNA_pol_Rpb2_7"/>
    <property type="match status" value="1"/>
</dbReference>
<dbReference type="SUPFAM" id="SSF64484">
    <property type="entry name" value="beta and beta-prime subunits of DNA dependent RNA-polymerase"/>
    <property type="match status" value="1"/>
</dbReference>
<dbReference type="PROSITE" id="PS01166">
    <property type="entry name" value="RNA_POL_BETA"/>
    <property type="match status" value="1"/>
</dbReference>
<protein>
    <recommendedName>
        <fullName evidence="1">DNA-directed RNA polymerase subunit beta</fullName>
        <shortName evidence="1">RNAP subunit beta</shortName>
        <ecNumber evidence="1">2.7.7.6</ecNumber>
    </recommendedName>
    <alternativeName>
        <fullName evidence="1">RNA polymerase subunit beta</fullName>
    </alternativeName>
    <alternativeName>
        <fullName evidence="1">Transcriptase subunit beta</fullName>
    </alternativeName>
</protein>
<reference key="1">
    <citation type="journal article" date="2002" name="Genome Res.">
        <title>A complete sequence of the T. tengcongensis genome.</title>
        <authorList>
            <person name="Bao Q."/>
            <person name="Tian Y."/>
            <person name="Li W."/>
            <person name="Xu Z."/>
            <person name="Xuan Z."/>
            <person name="Hu S."/>
            <person name="Dong W."/>
            <person name="Yang J."/>
            <person name="Chen Y."/>
            <person name="Xue Y."/>
            <person name="Xu Y."/>
            <person name="Lai X."/>
            <person name="Huang L."/>
            <person name="Dong X."/>
            <person name="Ma Y."/>
            <person name="Ling L."/>
            <person name="Tan H."/>
            <person name="Chen R."/>
            <person name="Wang J."/>
            <person name="Yu J."/>
            <person name="Yang H."/>
        </authorList>
    </citation>
    <scope>NUCLEOTIDE SEQUENCE [LARGE SCALE GENOMIC DNA]</scope>
    <source>
        <strain>DSM 15242 / JCM 11007 / NBRC 100824 / MB4</strain>
    </source>
</reference>
<comment type="function">
    <text evidence="1">DNA-dependent RNA polymerase catalyzes the transcription of DNA into RNA using the four ribonucleoside triphosphates as substrates.</text>
</comment>
<comment type="catalytic activity">
    <reaction evidence="1">
        <text>RNA(n) + a ribonucleoside 5'-triphosphate = RNA(n+1) + diphosphate</text>
        <dbReference type="Rhea" id="RHEA:21248"/>
        <dbReference type="Rhea" id="RHEA-COMP:14527"/>
        <dbReference type="Rhea" id="RHEA-COMP:17342"/>
        <dbReference type="ChEBI" id="CHEBI:33019"/>
        <dbReference type="ChEBI" id="CHEBI:61557"/>
        <dbReference type="ChEBI" id="CHEBI:140395"/>
        <dbReference type="EC" id="2.7.7.6"/>
    </reaction>
</comment>
<comment type="subunit">
    <text evidence="1">The RNAP catalytic core consists of 2 alpha, 1 beta, 1 beta' and 1 omega subunit. When a sigma factor is associated with the core the holoenzyme is formed, which can initiate transcription.</text>
</comment>
<comment type="similarity">
    <text evidence="1">Belongs to the RNA polymerase beta chain family.</text>
</comment>
<name>RPOB_CALS4</name>
<sequence length="1234" mass="138644">MVRPVQAGSRTRMSFAKIDEVLEIPDLIEVQKKSYQWFLEEGLKEVFQEISPIESFTGNLALEFVDYRLENNPKYSVEECKDRDTTYAAPLKVKVRLTNRETGEIKESEVFMGDLPLMTDKGTFIINGAERVIVSQLVRSPGVYYDQQFDKFGKKLIFATVIPNRGAWLEYEEDSNDVIYVRIDRTRKVPITVLLRAIGYNTDIQILDLLGEEEKLKATLDKDTTKSEEEALIEIYKRLRPGEPPTVESARSLFNALFFDPKRYDLAKVGRYKFNKKLALKARIANHKSAKRIVNPITGEVLVEEGEKITREKAEEIQNCGINEVEILVDGKVVKVVGNNTVDINKYPMPYDVSSLNIKELVNVRVLREILDNFSDEEAVLNEIKNRMDELVPKHITKDDIVATISYQLNLTHGVGFVDDIDHLGNRRVRSVGELLQNQFRIGLARLERVVKERMTIQDVNEVTPQNLINIRPVVAAIREFFGSSQLSQFMDQTNPLSELTHKRRVSALGPGGLSRERAGFEVRDVHYSHYGRICPIETPEGPNIGLITSLTTYARVNEYGFIETPYRKVDKATGTVTDEIVYMTADEEDEYIIAQANEPLDENNRFINDRVVCRLREEIISVPPTEVDFMDVSPKQIVSVSASLIPFLENDDANRALMGSNMQRQAVPLLKPEAPIVGTGMEYKAAVDSGAVILAKNDGIVEKVTADKVVIRTKDGKRDEYHLLKFKRSNQGTCINQRPIVNEGDEVKKGQVICDGPSTDHGELALGKNVLVGFMPWEGYNYEDAILISEELVMDDSLTSIHIEEYDAEARDTKLGPEEITREIPNVGEDALKDLDERGIIRIGAEVRAGDILVGKVTPKGETELTAEERLLRAIFGEKAREVRDTSLRVPHGESGIVVDVKVYSRENGDELPPGVNQMVRVFVAQKRKISVGDKMAGRHGNKGVISRILPVEDMPFLPDGTPLQICLNPLGVPSRMNIGQVLETHLGLVAKALGWYIASPVFDGATEKDIEELLAKSGFSPDGKVQLYDGRTGEPFDNKVTVGYMYMLKLHHLVDDKMHARSTGPYSLVTQQPLGGKAQFGGQRFGEMEVWALEAYGAAHTLQEMLTVKSDDVTGRVKAYEAIVKGENIPEPGIPESFKVLVKELQSLALDVKVITEDGQEIPIKEFEDDDDDVPDATLNINIEGREDAPPEEVYEEEYEEEPEELPEDIDFEPDNFDIDSEDLFMDDDYDG</sequence>